<keyword id="KW-0539">Nucleus</keyword>
<keyword id="KW-0677">Repeat</keyword>
<keyword id="KW-0690">Ribosome biogenesis</keyword>
<keyword id="KW-0698">rRNA processing</keyword>
<keyword id="KW-0853">WD repeat</keyword>
<reference key="1">
    <citation type="journal article" date="2005" name="Science">
        <title>The genome of the basidiomycetous yeast and human pathogen Cryptococcus neoformans.</title>
        <authorList>
            <person name="Loftus B.J."/>
            <person name="Fung E."/>
            <person name="Roncaglia P."/>
            <person name="Rowley D."/>
            <person name="Amedeo P."/>
            <person name="Bruno D."/>
            <person name="Vamathevan J."/>
            <person name="Miranda M."/>
            <person name="Anderson I.J."/>
            <person name="Fraser J.A."/>
            <person name="Allen J.E."/>
            <person name="Bosdet I.E."/>
            <person name="Brent M.R."/>
            <person name="Chiu R."/>
            <person name="Doering T.L."/>
            <person name="Donlin M.J."/>
            <person name="D'Souza C.A."/>
            <person name="Fox D.S."/>
            <person name="Grinberg V."/>
            <person name="Fu J."/>
            <person name="Fukushima M."/>
            <person name="Haas B.J."/>
            <person name="Huang J.C."/>
            <person name="Janbon G."/>
            <person name="Jones S.J.M."/>
            <person name="Koo H.L."/>
            <person name="Krzywinski M.I."/>
            <person name="Kwon-Chung K.J."/>
            <person name="Lengeler K.B."/>
            <person name="Maiti R."/>
            <person name="Marra M.A."/>
            <person name="Marra R.E."/>
            <person name="Mathewson C.A."/>
            <person name="Mitchell T.G."/>
            <person name="Pertea M."/>
            <person name="Riggs F.R."/>
            <person name="Salzberg S.L."/>
            <person name="Schein J.E."/>
            <person name="Shvartsbeyn A."/>
            <person name="Shin H."/>
            <person name="Shumway M."/>
            <person name="Specht C.A."/>
            <person name="Suh B.B."/>
            <person name="Tenney A."/>
            <person name="Utterback T.R."/>
            <person name="Wickes B.L."/>
            <person name="Wortman J.R."/>
            <person name="Wye N.H."/>
            <person name="Kronstad J.W."/>
            <person name="Lodge J.K."/>
            <person name="Heitman J."/>
            <person name="Davis R.W."/>
            <person name="Fraser C.M."/>
            <person name="Hyman R.W."/>
        </authorList>
    </citation>
    <scope>NUCLEOTIDE SEQUENCE [LARGE SCALE GENOMIC DNA]</scope>
    <source>
        <strain>B-3501A</strain>
    </source>
</reference>
<protein>
    <recommendedName>
        <fullName evidence="1">Ribosome biogenesis protein YTM1</fullName>
    </recommendedName>
</protein>
<name>YTM1_CRYNB</name>
<dbReference type="EMBL" id="AAEY01000066">
    <property type="protein sequence ID" value="EAL17218.1"/>
    <property type="molecule type" value="Genomic_DNA"/>
</dbReference>
<dbReference type="RefSeq" id="XP_771865.1">
    <property type="nucleotide sequence ID" value="XM_766772.1"/>
</dbReference>
<dbReference type="SMR" id="P0CS55"/>
<dbReference type="EnsemblFungi" id="AAW47063">
    <property type="protein sequence ID" value="AAW47063"/>
    <property type="gene ID" value="CNN00480"/>
</dbReference>
<dbReference type="GeneID" id="4939654"/>
<dbReference type="KEGG" id="cnb:CNBN0460"/>
<dbReference type="VEuPathDB" id="FungiDB:CNBN0460"/>
<dbReference type="HOGENOM" id="CLU_000288_57_0_1"/>
<dbReference type="OrthoDB" id="5652at5206"/>
<dbReference type="GO" id="GO:0005730">
    <property type="term" value="C:nucleolus"/>
    <property type="evidence" value="ECO:0007669"/>
    <property type="project" value="UniProtKB-SubCell"/>
</dbReference>
<dbReference type="GO" id="GO:0005654">
    <property type="term" value="C:nucleoplasm"/>
    <property type="evidence" value="ECO:0007669"/>
    <property type="project" value="UniProtKB-SubCell"/>
</dbReference>
<dbReference type="GO" id="GO:0030687">
    <property type="term" value="C:preribosome, large subunit precursor"/>
    <property type="evidence" value="ECO:0007669"/>
    <property type="project" value="UniProtKB-UniRule"/>
</dbReference>
<dbReference type="GO" id="GO:0043021">
    <property type="term" value="F:ribonucleoprotein complex binding"/>
    <property type="evidence" value="ECO:0007669"/>
    <property type="project" value="UniProtKB-UniRule"/>
</dbReference>
<dbReference type="GO" id="GO:0000466">
    <property type="term" value="P:maturation of 5.8S rRNA from tricistronic rRNA transcript (SSU-rRNA, 5.8S rRNA, LSU-rRNA)"/>
    <property type="evidence" value="ECO:0007669"/>
    <property type="project" value="UniProtKB-UniRule"/>
</dbReference>
<dbReference type="GO" id="GO:0000463">
    <property type="term" value="P:maturation of LSU-rRNA from tricistronic rRNA transcript (SSU-rRNA, 5.8S rRNA, LSU-rRNA)"/>
    <property type="evidence" value="ECO:0007669"/>
    <property type="project" value="UniProtKB-UniRule"/>
</dbReference>
<dbReference type="FunFam" id="2.130.10.10:FF:001095">
    <property type="entry name" value="Ribosome biogenesis protein YTM1"/>
    <property type="match status" value="1"/>
</dbReference>
<dbReference type="Gene3D" id="2.130.10.10">
    <property type="entry name" value="YVTN repeat-like/Quinoprotein amine dehydrogenase"/>
    <property type="match status" value="1"/>
</dbReference>
<dbReference type="HAMAP" id="MF_03029">
    <property type="entry name" value="WDR12"/>
    <property type="match status" value="1"/>
</dbReference>
<dbReference type="InterPro" id="IPR012972">
    <property type="entry name" value="NLE"/>
</dbReference>
<dbReference type="InterPro" id="IPR015943">
    <property type="entry name" value="WD40/YVTN_repeat-like_dom_sf"/>
</dbReference>
<dbReference type="InterPro" id="IPR019775">
    <property type="entry name" value="WD40_repeat_CS"/>
</dbReference>
<dbReference type="InterPro" id="IPR036322">
    <property type="entry name" value="WD40_repeat_dom_sf"/>
</dbReference>
<dbReference type="InterPro" id="IPR001680">
    <property type="entry name" value="WD40_rpt"/>
</dbReference>
<dbReference type="InterPro" id="IPR028599">
    <property type="entry name" value="WDR12/Ytm1"/>
</dbReference>
<dbReference type="PANTHER" id="PTHR19855:SF11">
    <property type="entry name" value="RIBOSOME BIOGENESIS PROTEIN WDR12"/>
    <property type="match status" value="1"/>
</dbReference>
<dbReference type="PANTHER" id="PTHR19855">
    <property type="entry name" value="WD40 REPEAT PROTEIN 12, 37"/>
    <property type="match status" value="1"/>
</dbReference>
<dbReference type="Pfam" id="PF08154">
    <property type="entry name" value="NLE"/>
    <property type="match status" value="1"/>
</dbReference>
<dbReference type="Pfam" id="PF00400">
    <property type="entry name" value="WD40"/>
    <property type="match status" value="3"/>
</dbReference>
<dbReference type="SMART" id="SM00320">
    <property type="entry name" value="WD40"/>
    <property type="match status" value="5"/>
</dbReference>
<dbReference type="SUPFAM" id="SSF50978">
    <property type="entry name" value="WD40 repeat-like"/>
    <property type="match status" value="1"/>
</dbReference>
<dbReference type="PROSITE" id="PS00678">
    <property type="entry name" value="WD_REPEATS_1"/>
    <property type="match status" value="2"/>
</dbReference>
<dbReference type="PROSITE" id="PS50082">
    <property type="entry name" value="WD_REPEATS_2"/>
    <property type="match status" value="4"/>
</dbReference>
<dbReference type="PROSITE" id="PS50294">
    <property type="entry name" value="WD_REPEATS_REGION"/>
    <property type="match status" value="2"/>
</dbReference>
<comment type="function">
    <text evidence="1">Component of the NOP7 complex, which is required for maturation of the 25S and 5.8S ribosomal RNAs and formation of the 60S ribosome.</text>
</comment>
<comment type="subunit">
    <text evidence="1">Component of the NOP7 complex, composed of ERB1, NOP7 and YTM1. The complex is held together by ERB1, which interacts with NOP7 via its N-terminal domain and with YTM1 via a high-affinity interaction between the seven-bladed beta-propeller domains of the 2 proteins. The NOP7 complex associates with the 66S pre-ribosome. Interacts (via UBL domain) with MDN1 (via VWFA/MIDAS domain).</text>
</comment>
<comment type="subcellular location">
    <subcellularLocation>
        <location evidence="1">Nucleus</location>
        <location evidence="1">Nucleolus</location>
    </subcellularLocation>
    <subcellularLocation>
        <location evidence="1">Nucleus</location>
        <location evidence="1">Nucleoplasm</location>
    </subcellularLocation>
</comment>
<comment type="similarity">
    <text evidence="1">Belongs to the WD repeat WDR12/YTM1 family.</text>
</comment>
<sequence>MSIDPAGSQASRQLPINLFTRSPTDAIPQSTYFIPSAWRRFQLSELINQVLGNTAENGSKPVPFDFLVNGEVLRGSLEAWVKKNRGGDEESQIDVEYVRSVMPPEEAARVEVEDWVSGLSLSRKGYVLLSSYLSHLQVLPLSAAAQSSSALYTLPLPTSLGATSCTWVSPQTQETDILVAAGGVDRQTHVYSIPSLSPDTADAPRELYTLHGHTGPISSVIASSSGKEIVTGSWDGNINLYVLPDAEPTEHQVPADPVSYLPGQGTKKRRKLEKDQEKAPIEGLTDGDATGEGGWRRAPDAVMRGHTGRVGGLVWDKLDSGKIWSAGWDGSVRGWEVETGAAGALRQGPFDKSALCVDQWKMNGTLATGNMDRTICLWDTRQATSLISLTLPTTSPVPSVTCHPTSPFTLASATYSGVVQIWDIRSPKTALFTVSKAQSKLADPNRKVTKNGKVLGERLLAVDWNGEVLVAGGEDGEVGIWRARGE</sequence>
<organism>
    <name type="scientific">Cryptococcus neoformans var. neoformans serotype D (strain B-3501A)</name>
    <name type="common">Filobasidiella neoformans</name>
    <dbReference type="NCBI Taxonomy" id="283643"/>
    <lineage>
        <taxon>Eukaryota</taxon>
        <taxon>Fungi</taxon>
        <taxon>Dikarya</taxon>
        <taxon>Basidiomycota</taxon>
        <taxon>Agaricomycotina</taxon>
        <taxon>Tremellomycetes</taxon>
        <taxon>Tremellales</taxon>
        <taxon>Cryptococcaceae</taxon>
        <taxon>Cryptococcus</taxon>
        <taxon>Cryptococcus neoformans species complex</taxon>
    </lineage>
</organism>
<evidence type="ECO:0000255" key="1">
    <source>
        <dbReference type="HAMAP-Rule" id="MF_03029"/>
    </source>
</evidence>
<evidence type="ECO:0000256" key="2">
    <source>
        <dbReference type="SAM" id="MobiDB-lite"/>
    </source>
</evidence>
<gene>
    <name evidence="1" type="primary">YTM1</name>
    <name type="ordered locus">CNBN0460</name>
</gene>
<feature type="chain" id="PRO_0000410340" description="Ribosome biogenesis protein YTM1">
    <location>
        <begin position="1"/>
        <end position="486"/>
    </location>
</feature>
<feature type="repeat" description="WD 1">
    <location>
        <begin position="212"/>
        <end position="251"/>
    </location>
</feature>
<feature type="repeat" description="WD 2">
    <location>
        <begin position="305"/>
        <end position="345"/>
    </location>
</feature>
<feature type="repeat" description="WD 3">
    <location>
        <begin position="349"/>
        <end position="388"/>
    </location>
</feature>
<feature type="repeat" description="WD 4">
    <location>
        <begin position="392"/>
        <end position="432"/>
    </location>
</feature>
<feature type="repeat" description="WD 5">
    <location>
        <begin position="454"/>
        <end position="486"/>
    </location>
</feature>
<feature type="region of interest" description="Ubiquitin-like (UBL) domain" evidence="1">
    <location>
        <begin position="12"/>
        <end position="99"/>
    </location>
</feature>
<feature type="region of interest" description="Disordered" evidence="2">
    <location>
        <begin position="249"/>
        <end position="299"/>
    </location>
</feature>
<accession>P0CS55</accession>
<accession>Q55HS5</accession>
<accession>Q5K7B0</accession>
<proteinExistence type="inferred from homology"/>